<evidence type="ECO:0000255" key="1">
    <source>
        <dbReference type="HAMAP-Rule" id="MF_00038"/>
    </source>
</evidence>
<protein>
    <recommendedName>
        <fullName evidence="1">Phospho-N-acetylmuramoyl-pentapeptide-transferase</fullName>
        <ecNumber evidence="1">2.7.8.13</ecNumber>
    </recommendedName>
    <alternativeName>
        <fullName evidence="1">UDP-MurNAc-pentapeptide phosphotransferase</fullName>
    </alternativeName>
</protein>
<sequence length="324" mass="34906">MLEQGLLVTAGVAFLISVALSPLFIPFLRKLKFGQSIRDEGPKSHQKKSGTPTMGGIVIYVSMMVTSLIMAIKFNHLGAEVSLLLLVTFGYGLIGFLDDYIKVVKKRNLGLTSKQKLVGQLVIAIAFFLIGKGQAFHTYIMIPGTDVKFELGWAYFVLVLFMLIGGSNAVNLTDGLDGLLSGTAAIAFGAFSIIAVAQEQFGVAIFCMAVVGAVLGFLVFNANPAKVFMGDTGSLALGGAIAAVAILLKQELLLVIIGGVFVMETLSVIIQVISFKTTGKRVFKMSPLHHHYELCGWSEWRVVVTFWSVGFLLAVLGIYIGVWM</sequence>
<dbReference type="EC" id="2.7.8.13" evidence="1"/>
<dbReference type="EMBL" id="CP001407">
    <property type="protein sequence ID" value="ACO28829.1"/>
    <property type="molecule type" value="Genomic_DNA"/>
</dbReference>
<dbReference type="RefSeq" id="WP_000893058.1">
    <property type="nucleotide sequence ID" value="NZ_CP009318.1"/>
</dbReference>
<dbReference type="SMR" id="C1EPS7"/>
<dbReference type="GeneID" id="92799814"/>
<dbReference type="KEGG" id="bcx:BCA_4017"/>
<dbReference type="PATRIC" id="fig|572264.18.peg.3970"/>
<dbReference type="UniPathway" id="UPA00219"/>
<dbReference type="Proteomes" id="UP000002210">
    <property type="component" value="Chromosome"/>
</dbReference>
<dbReference type="GO" id="GO:0005886">
    <property type="term" value="C:plasma membrane"/>
    <property type="evidence" value="ECO:0007669"/>
    <property type="project" value="UniProtKB-SubCell"/>
</dbReference>
<dbReference type="GO" id="GO:0046872">
    <property type="term" value="F:metal ion binding"/>
    <property type="evidence" value="ECO:0007669"/>
    <property type="project" value="UniProtKB-KW"/>
</dbReference>
<dbReference type="GO" id="GO:0008963">
    <property type="term" value="F:phospho-N-acetylmuramoyl-pentapeptide-transferase activity"/>
    <property type="evidence" value="ECO:0007669"/>
    <property type="project" value="UniProtKB-UniRule"/>
</dbReference>
<dbReference type="GO" id="GO:0051992">
    <property type="term" value="F:UDP-N-acetylmuramoyl-L-alanyl-D-glutamyl-meso-2,6-diaminopimelyl-D-alanyl-D-alanine:undecaprenyl-phosphate transferase activity"/>
    <property type="evidence" value="ECO:0007669"/>
    <property type="project" value="RHEA"/>
</dbReference>
<dbReference type="GO" id="GO:0051301">
    <property type="term" value="P:cell division"/>
    <property type="evidence" value="ECO:0007669"/>
    <property type="project" value="UniProtKB-KW"/>
</dbReference>
<dbReference type="GO" id="GO:0071555">
    <property type="term" value="P:cell wall organization"/>
    <property type="evidence" value="ECO:0007669"/>
    <property type="project" value="UniProtKB-KW"/>
</dbReference>
<dbReference type="GO" id="GO:0009252">
    <property type="term" value="P:peptidoglycan biosynthetic process"/>
    <property type="evidence" value="ECO:0007669"/>
    <property type="project" value="UniProtKB-UniRule"/>
</dbReference>
<dbReference type="GO" id="GO:0008360">
    <property type="term" value="P:regulation of cell shape"/>
    <property type="evidence" value="ECO:0007669"/>
    <property type="project" value="UniProtKB-KW"/>
</dbReference>
<dbReference type="CDD" id="cd06852">
    <property type="entry name" value="GT_MraY"/>
    <property type="match status" value="1"/>
</dbReference>
<dbReference type="HAMAP" id="MF_00038">
    <property type="entry name" value="MraY"/>
    <property type="match status" value="1"/>
</dbReference>
<dbReference type="InterPro" id="IPR000715">
    <property type="entry name" value="Glycosyl_transferase_4"/>
</dbReference>
<dbReference type="InterPro" id="IPR003524">
    <property type="entry name" value="PNAcMuramoyl-5peptid_Trfase"/>
</dbReference>
<dbReference type="InterPro" id="IPR018480">
    <property type="entry name" value="PNAcMuramoyl-5peptid_Trfase_CS"/>
</dbReference>
<dbReference type="NCBIfam" id="TIGR00445">
    <property type="entry name" value="mraY"/>
    <property type="match status" value="1"/>
</dbReference>
<dbReference type="PANTHER" id="PTHR22926">
    <property type="entry name" value="PHOSPHO-N-ACETYLMURAMOYL-PENTAPEPTIDE-TRANSFERASE"/>
    <property type="match status" value="1"/>
</dbReference>
<dbReference type="PANTHER" id="PTHR22926:SF5">
    <property type="entry name" value="PHOSPHO-N-ACETYLMURAMOYL-PENTAPEPTIDE-TRANSFERASE HOMOLOG"/>
    <property type="match status" value="1"/>
</dbReference>
<dbReference type="Pfam" id="PF00953">
    <property type="entry name" value="Glycos_transf_4"/>
    <property type="match status" value="1"/>
</dbReference>
<dbReference type="Pfam" id="PF10555">
    <property type="entry name" value="MraY_sig1"/>
    <property type="match status" value="1"/>
</dbReference>
<dbReference type="PROSITE" id="PS01348">
    <property type="entry name" value="MRAY_2"/>
    <property type="match status" value="1"/>
</dbReference>
<organism>
    <name type="scientific">Bacillus cereus (strain 03BB102)</name>
    <dbReference type="NCBI Taxonomy" id="572264"/>
    <lineage>
        <taxon>Bacteria</taxon>
        <taxon>Bacillati</taxon>
        <taxon>Bacillota</taxon>
        <taxon>Bacilli</taxon>
        <taxon>Bacillales</taxon>
        <taxon>Bacillaceae</taxon>
        <taxon>Bacillus</taxon>
        <taxon>Bacillus cereus group</taxon>
    </lineage>
</organism>
<keyword id="KW-0131">Cell cycle</keyword>
<keyword id="KW-0132">Cell division</keyword>
<keyword id="KW-1003">Cell membrane</keyword>
<keyword id="KW-0133">Cell shape</keyword>
<keyword id="KW-0961">Cell wall biogenesis/degradation</keyword>
<keyword id="KW-0460">Magnesium</keyword>
<keyword id="KW-0472">Membrane</keyword>
<keyword id="KW-0479">Metal-binding</keyword>
<keyword id="KW-0573">Peptidoglycan synthesis</keyword>
<keyword id="KW-0808">Transferase</keyword>
<keyword id="KW-0812">Transmembrane</keyword>
<keyword id="KW-1133">Transmembrane helix</keyword>
<accession>C1EPS7</accession>
<gene>
    <name evidence="1" type="primary">mraY</name>
    <name type="ordered locus">BCA_4017</name>
</gene>
<feature type="chain" id="PRO_1000117162" description="Phospho-N-acetylmuramoyl-pentapeptide-transferase">
    <location>
        <begin position="1"/>
        <end position="324"/>
    </location>
</feature>
<feature type="transmembrane region" description="Helical" evidence="1">
    <location>
        <begin position="5"/>
        <end position="25"/>
    </location>
</feature>
<feature type="transmembrane region" description="Helical" evidence="1">
    <location>
        <begin position="52"/>
        <end position="72"/>
    </location>
</feature>
<feature type="transmembrane region" description="Helical" evidence="1">
    <location>
        <begin position="77"/>
        <end position="97"/>
    </location>
</feature>
<feature type="transmembrane region" description="Helical" evidence="1">
    <location>
        <begin position="122"/>
        <end position="142"/>
    </location>
</feature>
<feature type="transmembrane region" description="Helical" evidence="1">
    <location>
        <begin position="149"/>
        <end position="169"/>
    </location>
</feature>
<feature type="transmembrane region" description="Helical" evidence="1">
    <location>
        <begin position="176"/>
        <end position="196"/>
    </location>
</feature>
<feature type="transmembrane region" description="Helical" evidence="1">
    <location>
        <begin position="201"/>
        <end position="221"/>
    </location>
</feature>
<feature type="transmembrane region" description="Helical" evidence="1">
    <location>
        <begin position="227"/>
        <end position="247"/>
    </location>
</feature>
<feature type="transmembrane region" description="Helical" evidence="1">
    <location>
        <begin position="253"/>
        <end position="273"/>
    </location>
</feature>
<feature type="transmembrane region" description="Helical" evidence="1">
    <location>
        <begin position="302"/>
        <end position="322"/>
    </location>
</feature>
<comment type="function">
    <text evidence="1">Catalyzes the initial step of the lipid cycle reactions in the biosynthesis of the cell wall peptidoglycan: transfers peptidoglycan precursor phospho-MurNAc-pentapeptide from UDP-MurNAc-pentapeptide onto the lipid carrier undecaprenyl phosphate, yielding undecaprenyl-pyrophosphoryl-MurNAc-pentapeptide, known as lipid I.</text>
</comment>
<comment type="catalytic activity">
    <reaction evidence="1">
        <text>UDP-N-acetyl-alpha-D-muramoyl-L-alanyl-gamma-D-glutamyl-meso-2,6-diaminopimeloyl-D-alanyl-D-alanine + di-trans,octa-cis-undecaprenyl phosphate = di-trans,octa-cis-undecaprenyl diphospho-N-acetyl-alpha-D-muramoyl-L-alanyl-D-glutamyl-meso-2,6-diaminopimeloyl-D-alanyl-D-alanine + UMP</text>
        <dbReference type="Rhea" id="RHEA:28386"/>
        <dbReference type="ChEBI" id="CHEBI:57865"/>
        <dbReference type="ChEBI" id="CHEBI:60392"/>
        <dbReference type="ChEBI" id="CHEBI:61386"/>
        <dbReference type="ChEBI" id="CHEBI:61387"/>
        <dbReference type="EC" id="2.7.8.13"/>
    </reaction>
</comment>
<comment type="cofactor">
    <cofactor evidence="1">
        <name>Mg(2+)</name>
        <dbReference type="ChEBI" id="CHEBI:18420"/>
    </cofactor>
</comment>
<comment type="pathway">
    <text evidence="1">Cell wall biogenesis; peptidoglycan biosynthesis.</text>
</comment>
<comment type="subcellular location">
    <subcellularLocation>
        <location evidence="1">Cell membrane</location>
        <topology evidence="1">Multi-pass membrane protein</topology>
    </subcellularLocation>
</comment>
<comment type="similarity">
    <text evidence="1">Belongs to the glycosyltransferase 4 family. MraY subfamily.</text>
</comment>
<proteinExistence type="inferred from homology"/>
<reference key="1">
    <citation type="submission" date="2009-02" db="EMBL/GenBank/DDBJ databases">
        <title>Genome sequence of Bacillus cereus 03BB102.</title>
        <authorList>
            <person name="Dodson R.J."/>
            <person name="Jackson P."/>
            <person name="Munk A.C."/>
            <person name="Brettin T."/>
            <person name="Bruce D."/>
            <person name="Detter C."/>
            <person name="Tapia R."/>
            <person name="Han C."/>
            <person name="Sutton G."/>
            <person name="Sims D."/>
        </authorList>
    </citation>
    <scope>NUCLEOTIDE SEQUENCE [LARGE SCALE GENOMIC DNA]</scope>
    <source>
        <strain>03BB102</strain>
    </source>
</reference>
<name>MRAY_BACC3</name>